<sequence>MEIYADQKYTKLVSHLYYQNSHEIVHSSKIYQLALTNPDILSQYINYPDESNESHESHDCHESQNSTHYKFRLMEIYHKMIIIDNNMDLLDLLFEIMSDDFRCDDCVILDLAIRHQRTDVFNKYIILGFDLNRLINSSTILDEIILWYHQIKKYDTGIELCDYLIDNGASISIHNYCTIINAFDTLNDKYVSFFLNKISLNDLGNLLFWYLRNYYNVNIDIVETILSNGIDINNFHEYSYMLIGKFNVPIMNLFIRYGLIIHDDVIDDACRYGNHLLVDYLMEIGHKPSKQIITNVIENHNVNIIKLFVKYNIDLSDIKPPTSPEIIQLVKSLESNGLSVDYVYGYILDKFNLSGKLCI</sequence>
<keyword id="KW-0040">ANK repeat</keyword>
<keyword id="KW-1185">Reference proteome</keyword>
<keyword id="KW-0677">Repeat</keyword>
<organismHost>
    <name type="scientific">Acanthamoeba polyphaga</name>
    <name type="common">Amoeba</name>
    <dbReference type="NCBI Taxonomy" id="5757"/>
</organismHost>
<proteinExistence type="predicted"/>
<organism>
    <name type="scientific">Acanthamoeba polyphaga mimivirus</name>
    <name type="common">APMV</name>
    <dbReference type="NCBI Taxonomy" id="212035"/>
    <lineage>
        <taxon>Viruses</taxon>
        <taxon>Varidnaviria</taxon>
        <taxon>Bamfordvirae</taxon>
        <taxon>Nucleocytoviricota</taxon>
        <taxon>Megaviricetes</taxon>
        <taxon>Imitervirales</taxon>
        <taxon>Mimiviridae</taxon>
        <taxon>Megamimivirinae</taxon>
        <taxon>Mimivirus</taxon>
        <taxon>Mimivirus bradfordmassiliense</taxon>
    </lineage>
</organism>
<feature type="chain" id="PRO_0000067162" description="Putative ankyrin repeat protein R190">
    <location>
        <begin position="1"/>
        <end position="359"/>
    </location>
</feature>
<feature type="repeat" description="ANK 1">
    <location>
        <begin position="72"/>
        <end position="103"/>
    </location>
</feature>
<feature type="repeat" description="ANK 2">
    <location>
        <begin position="105"/>
        <end position="133"/>
    </location>
</feature>
<feature type="repeat" description="ANK 3">
    <location>
        <begin position="142"/>
        <end position="173"/>
    </location>
</feature>
<feature type="repeat" description="ANK 4">
    <location>
        <begin position="203"/>
        <end position="234"/>
    </location>
</feature>
<feature type="repeat" description="ANK 5">
    <location>
        <begin position="236"/>
        <end position="260"/>
    </location>
</feature>
<feature type="repeat" description="ANK 6">
    <location>
        <begin position="261"/>
        <end position="287"/>
    </location>
</feature>
<feature type="repeat" description="ANK 7">
    <location>
        <begin position="288"/>
        <end position="317"/>
    </location>
</feature>
<accession>Q5UQ12</accession>
<reference key="1">
    <citation type="journal article" date="2004" name="Science">
        <title>The 1.2-megabase genome sequence of Mimivirus.</title>
        <authorList>
            <person name="Raoult D."/>
            <person name="Audic S."/>
            <person name="Robert C."/>
            <person name="Abergel C."/>
            <person name="Renesto P."/>
            <person name="Ogata H."/>
            <person name="La Scola B."/>
            <person name="Susan M."/>
            <person name="Claverie J.-M."/>
        </authorList>
    </citation>
    <scope>NUCLEOTIDE SEQUENCE [LARGE SCALE GENOMIC DNA]</scope>
    <source>
        <strain>Rowbotham-Bradford</strain>
    </source>
</reference>
<gene>
    <name type="ordered locus">MIMI_R190</name>
</gene>
<protein>
    <recommendedName>
        <fullName>Putative ankyrin repeat protein R190</fullName>
    </recommendedName>
</protein>
<dbReference type="EMBL" id="AY653733">
    <property type="protein sequence ID" value="AAV50464.1"/>
    <property type="molecule type" value="Genomic_DNA"/>
</dbReference>
<dbReference type="SMR" id="Q5UQ12"/>
<dbReference type="KEGG" id="vg:9924795"/>
<dbReference type="Proteomes" id="UP000001134">
    <property type="component" value="Genome"/>
</dbReference>
<dbReference type="Gene3D" id="1.25.40.20">
    <property type="entry name" value="Ankyrin repeat-containing domain"/>
    <property type="match status" value="1"/>
</dbReference>
<dbReference type="InterPro" id="IPR036770">
    <property type="entry name" value="Ankyrin_rpt-contain_sf"/>
</dbReference>
<name>YR190_MIMIV</name>